<sequence length="241" mass="26171">MTASADIRLSDVRFSYGETAMHFDVTITGGEIAAIVGPSGSGKSTFLNLIAGFETPQSGIISINGVDVTHLPPADRPVSMVFQENNLFAHLTVEQNVDLGRSPNLRLNEEDRKAVASALARVGLQGKEKRKPEALSGGERQRVAIARVLVRERPVLLLDEAFASLGPALRHQMLDLVNKLRRETGMTVLMVTHTPEDALHLDALLIFLDNGKIAAQGPATEMLSRAGPEALRHYIGEMRSF</sequence>
<proteinExistence type="inferred from homology"/>
<organism>
    <name type="scientific">Brucella melitensis biotype 1 (strain ATCC 23456 / CCUG 17765 / NCTC 10094 / 16M)</name>
    <dbReference type="NCBI Taxonomy" id="224914"/>
    <lineage>
        <taxon>Bacteria</taxon>
        <taxon>Pseudomonadati</taxon>
        <taxon>Pseudomonadota</taxon>
        <taxon>Alphaproteobacteria</taxon>
        <taxon>Hyphomicrobiales</taxon>
        <taxon>Brucellaceae</taxon>
        <taxon>Brucella/Ochrobactrum group</taxon>
        <taxon>Brucella</taxon>
    </lineage>
</organism>
<protein>
    <recommendedName>
        <fullName evidence="1">Thiamine import ATP-binding protein ThiQ</fullName>
        <ecNumber evidence="1">7.6.2.15</ecNumber>
    </recommendedName>
</protein>
<reference key="1">
    <citation type="journal article" date="2002" name="Proc. Natl. Acad. Sci. U.S.A.">
        <title>The genome sequence of the facultative intracellular pathogen Brucella melitensis.</title>
        <authorList>
            <person name="DelVecchio V.G."/>
            <person name="Kapatral V."/>
            <person name="Redkar R.J."/>
            <person name="Patra G."/>
            <person name="Mujer C."/>
            <person name="Los T."/>
            <person name="Ivanova N."/>
            <person name="Anderson I."/>
            <person name="Bhattacharyya A."/>
            <person name="Lykidis A."/>
            <person name="Reznik G."/>
            <person name="Jablonski L."/>
            <person name="Larsen N."/>
            <person name="D'Souza M."/>
            <person name="Bernal A."/>
            <person name="Mazur M."/>
            <person name="Goltsman E."/>
            <person name="Selkov E."/>
            <person name="Elzer P.H."/>
            <person name="Hagius S."/>
            <person name="O'Callaghan D."/>
            <person name="Letesson J.-J."/>
            <person name="Haselkorn R."/>
            <person name="Kyrpides N.C."/>
            <person name="Overbeek R."/>
        </authorList>
    </citation>
    <scope>NUCLEOTIDE SEQUENCE [LARGE SCALE GENOMIC DNA]</scope>
    <source>
        <strain>ATCC 23456 / CCUG 17765 / NCTC 10094 / 16M</strain>
    </source>
</reference>
<evidence type="ECO:0000255" key="1">
    <source>
        <dbReference type="HAMAP-Rule" id="MF_01723"/>
    </source>
</evidence>
<evidence type="ECO:0000305" key="2"/>
<comment type="function">
    <text evidence="1">Part of the ABC transporter complex ThiBPQ involved in thiamine import. Responsible for energy coupling to the transport system.</text>
</comment>
<comment type="catalytic activity">
    <reaction evidence="1">
        <text>thiamine(out) + ATP + H2O = thiamine(in) + ADP + phosphate + H(+)</text>
        <dbReference type="Rhea" id="RHEA:29811"/>
        <dbReference type="ChEBI" id="CHEBI:15377"/>
        <dbReference type="ChEBI" id="CHEBI:15378"/>
        <dbReference type="ChEBI" id="CHEBI:18385"/>
        <dbReference type="ChEBI" id="CHEBI:30616"/>
        <dbReference type="ChEBI" id="CHEBI:43474"/>
        <dbReference type="ChEBI" id="CHEBI:456216"/>
        <dbReference type="EC" id="7.6.2.15"/>
    </reaction>
</comment>
<comment type="subunit">
    <text evidence="1">The complex is composed of two ATP-binding proteins (ThiQ), two transmembrane proteins (ThiP) and a solute-binding protein (ThiB).</text>
</comment>
<comment type="subcellular location">
    <subcellularLocation>
        <location evidence="1">Cell inner membrane</location>
        <topology evidence="1">Peripheral membrane protein</topology>
    </subcellularLocation>
</comment>
<comment type="similarity">
    <text evidence="1">Belongs to the ABC transporter superfamily. Thiamine importer (TC 3.A.1.19.1) family.</text>
</comment>
<comment type="sequence caution" evidence="2">
    <conflict type="erroneous initiation">
        <sequence resource="EMBL-CDS" id="AAL51464"/>
    </conflict>
</comment>
<keyword id="KW-0067">ATP-binding</keyword>
<keyword id="KW-0997">Cell inner membrane</keyword>
<keyword id="KW-1003">Cell membrane</keyword>
<keyword id="KW-0472">Membrane</keyword>
<keyword id="KW-0547">Nucleotide-binding</keyword>
<keyword id="KW-1278">Translocase</keyword>
<keyword id="KW-0813">Transport</keyword>
<gene>
    <name evidence="1" type="primary">thiQ</name>
    <name type="ordered locus">BMEI0283</name>
</gene>
<dbReference type="EC" id="7.6.2.15" evidence="1"/>
<dbReference type="EMBL" id="AE008917">
    <property type="protein sequence ID" value="AAL51464.1"/>
    <property type="status" value="ALT_INIT"/>
    <property type="molecule type" value="Genomic_DNA"/>
</dbReference>
<dbReference type="PIR" id="AE3287">
    <property type="entry name" value="AE3287"/>
</dbReference>
<dbReference type="RefSeq" id="WP_002964843.1">
    <property type="nucleotide sequence ID" value="NZ_GG703781.1"/>
</dbReference>
<dbReference type="SMR" id="Q8YJ04"/>
<dbReference type="GeneID" id="97532856"/>
<dbReference type="KEGG" id="bme:BMEI0283"/>
<dbReference type="KEGG" id="bmel:DK63_1150"/>
<dbReference type="PATRIC" id="fig|224914.52.peg.1214"/>
<dbReference type="eggNOG" id="COG3840">
    <property type="taxonomic scope" value="Bacteria"/>
</dbReference>
<dbReference type="PhylomeDB" id="Q8YJ04"/>
<dbReference type="Proteomes" id="UP000000419">
    <property type="component" value="Chromosome I"/>
</dbReference>
<dbReference type="GO" id="GO:0005886">
    <property type="term" value="C:plasma membrane"/>
    <property type="evidence" value="ECO:0007669"/>
    <property type="project" value="UniProtKB-SubCell"/>
</dbReference>
<dbReference type="GO" id="GO:0048502">
    <property type="term" value="F:ABC-type thiamine transporter activity"/>
    <property type="evidence" value="ECO:0007669"/>
    <property type="project" value="UniProtKB-EC"/>
</dbReference>
<dbReference type="GO" id="GO:0005524">
    <property type="term" value="F:ATP binding"/>
    <property type="evidence" value="ECO:0007669"/>
    <property type="project" value="UniProtKB-KW"/>
</dbReference>
<dbReference type="GO" id="GO:0016887">
    <property type="term" value="F:ATP hydrolysis activity"/>
    <property type="evidence" value="ECO:0007669"/>
    <property type="project" value="InterPro"/>
</dbReference>
<dbReference type="CDD" id="cd03298">
    <property type="entry name" value="ABC_ThiQ_thiamine_transporter"/>
    <property type="match status" value="1"/>
</dbReference>
<dbReference type="Gene3D" id="3.40.50.300">
    <property type="entry name" value="P-loop containing nucleotide triphosphate hydrolases"/>
    <property type="match status" value="1"/>
</dbReference>
<dbReference type="InterPro" id="IPR003593">
    <property type="entry name" value="AAA+_ATPase"/>
</dbReference>
<dbReference type="InterPro" id="IPR050093">
    <property type="entry name" value="ABC_SmlMolc_Importer"/>
</dbReference>
<dbReference type="InterPro" id="IPR003439">
    <property type="entry name" value="ABC_transporter-like_ATP-bd"/>
</dbReference>
<dbReference type="InterPro" id="IPR017871">
    <property type="entry name" value="ABC_transporter-like_CS"/>
</dbReference>
<dbReference type="InterPro" id="IPR027417">
    <property type="entry name" value="P-loop_NTPase"/>
</dbReference>
<dbReference type="InterPro" id="IPR005968">
    <property type="entry name" value="Thiamine_ABC_ThiQ"/>
</dbReference>
<dbReference type="NCBIfam" id="TIGR01277">
    <property type="entry name" value="thiQ"/>
    <property type="match status" value="1"/>
</dbReference>
<dbReference type="PANTHER" id="PTHR42781">
    <property type="entry name" value="SPERMIDINE/PUTRESCINE IMPORT ATP-BINDING PROTEIN POTA"/>
    <property type="match status" value="1"/>
</dbReference>
<dbReference type="PANTHER" id="PTHR42781:SF1">
    <property type="entry name" value="THIAMINE IMPORT ATP-BINDING PROTEIN THIQ"/>
    <property type="match status" value="1"/>
</dbReference>
<dbReference type="Pfam" id="PF00005">
    <property type="entry name" value="ABC_tran"/>
    <property type="match status" value="1"/>
</dbReference>
<dbReference type="SMART" id="SM00382">
    <property type="entry name" value="AAA"/>
    <property type="match status" value="1"/>
</dbReference>
<dbReference type="SUPFAM" id="SSF52540">
    <property type="entry name" value="P-loop containing nucleoside triphosphate hydrolases"/>
    <property type="match status" value="1"/>
</dbReference>
<dbReference type="PROSITE" id="PS00211">
    <property type="entry name" value="ABC_TRANSPORTER_1"/>
    <property type="match status" value="1"/>
</dbReference>
<dbReference type="PROSITE" id="PS50893">
    <property type="entry name" value="ABC_TRANSPORTER_2"/>
    <property type="match status" value="1"/>
</dbReference>
<dbReference type="PROSITE" id="PS51288">
    <property type="entry name" value="THIQ"/>
    <property type="match status" value="1"/>
</dbReference>
<feature type="chain" id="PRO_0000274435" description="Thiamine import ATP-binding protein ThiQ">
    <location>
        <begin position="1"/>
        <end position="241"/>
    </location>
</feature>
<feature type="domain" description="ABC transporter" evidence="1">
    <location>
        <begin position="7"/>
        <end position="235"/>
    </location>
</feature>
<feature type="binding site" evidence="1">
    <location>
        <begin position="37"/>
        <end position="44"/>
    </location>
    <ligand>
        <name>ATP</name>
        <dbReference type="ChEBI" id="CHEBI:30616"/>
    </ligand>
</feature>
<accession>Q8YJ04</accession>
<name>THIQ_BRUME</name>